<name>APC13_XENTR</name>
<reference key="1">
    <citation type="submission" date="2006-06" db="EMBL/GenBank/DDBJ databases">
        <authorList>
            <consortium name="Sanger Xenopus tropicalis EST/cDNA project"/>
        </authorList>
    </citation>
    <scope>NUCLEOTIDE SEQUENCE [LARGE SCALE MRNA]</scope>
    <source>
        <tissue>Neurula</tissue>
    </source>
</reference>
<reference key="2">
    <citation type="submission" date="2006-08" db="EMBL/GenBank/DDBJ databases">
        <authorList>
            <consortium name="NIH - Xenopus Gene Collection (XGC) project"/>
        </authorList>
    </citation>
    <scope>NUCLEOTIDE SEQUENCE [LARGE SCALE MRNA]</scope>
    <source>
        <tissue>Brain</tissue>
    </source>
</reference>
<organism>
    <name type="scientific">Xenopus tropicalis</name>
    <name type="common">Western clawed frog</name>
    <name type="synonym">Silurana tropicalis</name>
    <dbReference type="NCBI Taxonomy" id="8364"/>
    <lineage>
        <taxon>Eukaryota</taxon>
        <taxon>Metazoa</taxon>
        <taxon>Chordata</taxon>
        <taxon>Craniata</taxon>
        <taxon>Vertebrata</taxon>
        <taxon>Euteleostomi</taxon>
        <taxon>Amphibia</taxon>
        <taxon>Batrachia</taxon>
        <taxon>Anura</taxon>
        <taxon>Pipoidea</taxon>
        <taxon>Pipidae</taxon>
        <taxon>Xenopodinae</taxon>
        <taxon>Xenopus</taxon>
        <taxon>Silurana</taxon>
    </lineage>
</organism>
<keyword id="KW-0131">Cell cycle</keyword>
<keyword id="KW-0132">Cell division</keyword>
<keyword id="KW-0498">Mitosis</keyword>
<keyword id="KW-0539">Nucleus</keyword>
<keyword id="KW-1185">Reference proteome</keyword>
<keyword id="KW-0833">Ubl conjugation pathway</keyword>
<dbReference type="EMBL" id="CR760186">
    <property type="protein sequence ID" value="CAJ82693.1"/>
    <property type="molecule type" value="mRNA"/>
</dbReference>
<dbReference type="EMBL" id="BC121222">
    <property type="protein sequence ID" value="AAI21223.1"/>
    <property type="molecule type" value="mRNA"/>
</dbReference>
<dbReference type="RefSeq" id="NP_001017240.1">
    <property type="nucleotide sequence ID" value="NM_001017240.2"/>
</dbReference>
<dbReference type="RefSeq" id="XP_012823933.1">
    <property type="nucleotide sequence ID" value="XM_012968479.2"/>
</dbReference>
<dbReference type="RefSeq" id="XP_012823934.1">
    <property type="nucleotide sequence ID" value="XM_012968480.2"/>
</dbReference>
<dbReference type="SMR" id="Q28IW8"/>
<dbReference type="FunCoup" id="Q28IW8">
    <property type="interactions" value="408"/>
</dbReference>
<dbReference type="STRING" id="8364.ENSXETP00000048297"/>
<dbReference type="PaxDb" id="8364-ENSXETP00000005540"/>
<dbReference type="GeneID" id="549994"/>
<dbReference type="KEGG" id="xtr:549994"/>
<dbReference type="AGR" id="Xenbase:XB-GENE-958927"/>
<dbReference type="CTD" id="25847"/>
<dbReference type="Xenbase" id="XB-GENE-958927">
    <property type="gene designation" value="anapc13"/>
</dbReference>
<dbReference type="eggNOG" id="ENOG502S4J1">
    <property type="taxonomic scope" value="Eukaryota"/>
</dbReference>
<dbReference type="HOGENOM" id="CLU_199969_0_0_1"/>
<dbReference type="InParanoid" id="Q28IW8"/>
<dbReference type="OrthoDB" id="25675at2759"/>
<dbReference type="TreeFam" id="TF105448"/>
<dbReference type="Reactome" id="R-XTR-983168">
    <property type="pathway name" value="Antigen processing: Ubiquitination &amp; Proteasome degradation"/>
</dbReference>
<dbReference type="UniPathway" id="UPA00143"/>
<dbReference type="Proteomes" id="UP000008143">
    <property type="component" value="Chromosome 8"/>
</dbReference>
<dbReference type="GO" id="GO:0005680">
    <property type="term" value="C:anaphase-promoting complex"/>
    <property type="evidence" value="ECO:0000250"/>
    <property type="project" value="UniProtKB"/>
</dbReference>
<dbReference type="GO" id="GO:0031145">
    <property type="term" value="P:anaphase-promoting complex-dependent catabolic process"/>
    <property type="evidence" value="ECO:0000250"/>
    <property type="project" value="UniProtKB"/>
</dbReference>
<dbReference type="GO" id="GO:0051301">
    <property type="term" value="P:cell division"/>
    <property type="evidence" value="ECO:0007669"/>
    <property type="project" value="UniProtKB-KW"/>
</dbReference>
<dbReference type="GO" id="GO:0141198">
    <property type="term" value="P:protein branched polyubiquitination"/>
    <property type="evidence" value="ECO:0000250"/>
    <property type="project" value="UniProtKB"/>
</dbReference>
<dbReference type="GO" id="GO:0070979">
    <property type="term" value="P:protein K11-linked ubiquitination"/>
    <property type="evidence" value="ECO:0000250"/>
    <property type="project" value="UniProtKB"/>
</dbReference>
<dbReference type="GO" id="GO:0070936">
    <property type="term" value="P:protein K48-linked ubiquitination"/>
    <property type="evidence" value="ECO:0000250"/>
    <property type="project" value="UniProtKB"/>
</dbReference>
<dbReference type="InterPro" id="IPR008401">
    <property type="entry name" value="Apc13"/>
</dbReference>
<dbReference type="PANTHER" id="PTHR28672">
    <property type="entry name" value="ANAPHASE-PROMOTING COMPLEX SUBUNIT 13"/>
    <property type="match status" value="1"/>
</dbReference>
<dbReference type="PANTHER" id="PTHR28672:SF1">
    <property type="entry name" value="ANAPHASE-PROMOTING COMPLEX SUBUNIT 13"/>
    <property type="match status" value="1"/>
</dbReference>
<dbReference type="Pfam" id="PF05839">
    <property type="entry name" value="Apc13p"/>
    <property type="match status" value="1"/>
</dbReference>
<accession>Q28IW8</accession>
<accession>Q0IJ25</accession>
<sequence>MDSEVLRDGRILDLIDDAWREDKLPYEDVTIPLNELPEPEQDNGGATESVKEQEMKWADLALQYLHENISSSGS</sequence>
<evidence type="ECO:0000250" key="1">
    <source>
        <dbReference type="UniProtKB" id="Q9BS18"/>
    </source>
</evidence>
<evidence type="ECO:0000305" key="2"/>
<protein>
    <recommendedName>
        <fullName>Anaphase-promoting complex subunit 13</fullName>
        <shortName>APC13</shortName>
    </recommendedName>
    <alternativeName>
        <fullName>Cyclosome subunit 13</fullName>
    </alternativeName>
</protein>
<feature type="chain" id="PRO_0000253983" description="Anaphase-promoting complex subunit 13">
    <location>
        <begin position="1"/>
        <end position="74"/>
    </location>
</feature>
<feature type="sequence conflict" description="In Ref. 2; AAI21223." evidence="2" ref="2">
    <original>S</original>
    <variation>P</variation>
    <location>
        <position position="70"/>
    </location>
</feature>
<proteinExistence type="inferred from homology"/>
<gene>
    <name type="primary">anapc13</name>
    <name type="ORF">TNeu008m03.1</name>
</gene>
<comment type="function">
    <text evidence="1">Component of the anaphase promoting complex/cyclosome (APC/C), a cell cycle-regulated E3 ubiquitin ligase that controls progression through mitosis and the G1 phase of the cell cycle. The APC/C complex acts by mediating ubiquitination and subsequent degradation of target proteins: it mainly mediates the formation of 'Lys-11'-linked polyubiquitin chains and, to a lower extent, the formation of 'Lys-48'- and 'Lys-63'-linked polyubiquitin chains. The APC/C complex catalyzes assembly of branched 'Lys-11'-/'Lys-48'-linked branched ubiquitin chains on target proteins.</text>
</comment>
<comment type="pathway">
    <text evidence="1">Protein modification; protein ubiquitination.</text>
</comment>
<comment type="subunit">
    <text evidence="1">The APC/C is composed of at least 12 subunits.</text>
</comment>
<comment type="subcellular location">
    <subcellularLocation>
        <location evidence="2">Nucleus</location>
    </subcellularLocation>
</comment>
<comment type="similarity">
    <text evidence="2">Belongs to the APC13 family.</text>
</comment>